<protein>
    <recommendedName>
        <fullName>Probable glutamyl endopeptidase, chloroplastic</fullName>
        <ecNumber>3.4.21.-</ecNumber>
    </recommendedName>
</protein>
<evidence type="ECO:0000250" key="1"/>
<evidence type="ECO:0000255" key="2"/>
<evidence type="ECO:0000256" key="3">
    <source>
        <dbReference type="SAM" id="MobiDB-lite"/>
    </source>
</evidence>
<evidence type="ECO:0000269" key="4">
    <source ref="4"/>
</evidence>
<evidence type="ECO:0000303" key="5">
    <source>
    </source>
</evidence>
<evidence type="ECO:0000305" key="6"/>
<accession>Q8VZF3</accession>
<accession>O22913</accession>
<accession>Q8L635</accession>
<sequence>MMRFHKACHRFSLSPLCHLSPPSPSPASSLLLLPKLSGFSTLSTRRCVRVRRFSENPLTTVMASRSASRLRSLASACSGGAEDGGGTSNGSLSASATATEDDELAIGTGYRLPPPEIRDIVDAPPVPALSFSPHRDKILFLKRRALPPLADLARPEEKLAGVRIDGYCNTRSRMSFYTGLGIHQLLPDGTLSPEKEITGIPDGGKINFVTWSNDGKHLAFSIRVDENGNSSKPVVWVADVETGVARPLFNSQDIFLNAIFESFVWIDNSTLLVSTIPSSRGEPPKKPLVPSGPKTLSNETKTVVQVRTFQDLLKDEYDADLFDYYASSQLVLASLDGTVKEVGVPAVYTSLDPSTDHKYLLVSSLHRPYSFIVPCGRFPKKVEVWTTDGRFVRQLCDLPLAEDIPIASNSVRKGMRSINWRADKPSTLWAETQDGGDAKMEVSPRDIVYMQSAEPLAGEEPEVLHKLDLRYGGISWCDDTLALVYESWYKTRRTRTWVISPGSNDVSPRILFDRSSEDVYSDPGSTMLRRTDAGTYVIAKIKKENDEGTYVLLNGSGATPQGNVPFLDLFDINTGNKERIWESDKEKYFETVVALMSDQKEGDLKMEELKILTSKESKTENTQYSLQLWPDRKVQQITNFPHPYPQLASLQKEMIRYQRKDGVQLTATLYLPPGYDPSKDGPLPCLFWSYPGEFKSKDAAGQVRGSPNEFAGIGSTSALLWLARRFAILSGPTIPIIGEGDEEANDRYVEQLVASAEAAVEEVVRRGVADRSKIAVGGHSYGAFMTANLLAHAPHLFACGIARSGAYNRTLTPFGFQNEDRTLWEATNVYVEMSPFMSANKIKKPILLIHGEEDNNPGTLTMQSDRFFNALKGHGALCRLVVLPHESHGYSARESIMHVLWETDRWLQKYCVPNTSDADTSPDQSKEGSDSADKVSTGTGGGNPEFGEHEVHSKLRRSLL</sequence>
<name>CGEP_ARATH</name>
<comment type="function">
    <text evidence="1 4">Serine-type protease active in vitro against the LHCII N-terminal. Cleaves its substrate on the carboxy-side of Glu residues (By similarity).</text>
</comment>
<comment type="subcellular location">
    <subcellularLocation>
        <location evidence="1">Plastid</location>
        <location evidence="1">Chloroplast stroma</location>
    </subcellularLocation>
</comment>
<comment type="alternative products">
    <event type="alternative splicing"/>
    <isoform>
        <id>Q8VZF3-1</id>
        <name>1</name>
        <sequence type="displayed"/>
    </isoform>
    <isoform>
        <id>Q8VZF3-2</id>
        <name>2</name>
        <sequence type="described" ref="VSP_039719"/>
    </isoform>
</comment>
<comment type="similarity">
    <text evidence="6">Belongs to the peptidase S9D family.</text>
</comment>
<comment type="sequence caution" evidence="6">
    <conflict type="erroneous gene model prediction">
        <sequence resource="EMBL-CDS" id="AAB63841"/>
    </conflict>
</comment>
<keyword id="KW-0025">Alternative splicing</keyword>
<keyword id="KW-0150">Chloroplast</keyword>
<keyword id="KW-0378">Hydrolase</keyword>
<keyword id="KW-0934">Plastid</keyword>
<keyword id="KW-0645">Protease</keyword>
<keyword id="KW-1185">Reference proteome</keyword>
<keyword id="KW-0720">Serine protease</keyword>
<keyword id="KW-0809">Transit peptide</keyword>
<reference key="1">
    <citation type="journal article" date="1999" name="Nature">
        <title>Sequence and analysis of chromosome 2 of the plant Arabidopsis thaliana.</title>
        <authorList>
            <person name="Lin X."/>
            <person name="Kaul S."/>
            <person name="Rounsley S.D."/>
            <person name="Shea T.P."/>
            <person name="Benito M.-I."/>
            <person name="Town C.D."/>
            <person name="Fujii C.Y."/>
            <person name="Mason T.M."/>
            <person name="Bowman C.L."/>
            <person name="Barnstead M.E."/>
            <person name="Feldblyum T.V."/>
            <person name="Buell C.R."/>
            <person name="Ketchum K.A."/>
            <person name="Lee J.J."/>
            <person name="Ronning C.M."/>
            <person name="Koo H.L."/>
            <person name="Moffat K.S."/>
            <person name="Cronin L.A."/>
            <person name="Shen M."/>
            <person name="Pai G."/>
            <person name="Van Aken S."/>
            <person name="Umayam L."/>
            <person name="Tallon L.J."/>
            <person name="Gill J.E."/>
            <person name="Adams M.D."/>
            <person name="Carrera A.J."/>
            <person name="Creasy T.H."/>
            <person name="Goodman H.M."/>
            <person name="Somerville C.R."/>
            <person name="Copenhaver G.P."/>
            <person name="Preuss D."/>
            <person name="Nierman W.C."/>
            <person name="White O."/>
            <person name="Eisen J.A."/>
            <person name="Salzberg S.L."/>
            <person name="Fraser C.M."/>
            <person name="Venter J.C."/>
        </authorList>
    </citation>
    <scope>NUCLEOTIDE SEQUENCE [LARGE SCALE GENOMIC DNA]</scope>
    <source>
        <strain>cv. Columbia</strain>
    </source>
</reference>
<reference key="2">
    <citation type="journal article" date="2017" name="Plant J.">
        <title>Araport11: a complete reannotation of the Arabidopsis thaliana reference genome.</title>
        <authorList>
            <person name="Cheng C.Y."/>
            <person name="Krishnakumar V."/>
            <person name="Chan A.P."/>
            <person name="Thibaud-Nissen F."/>
            <person name="Schobel S."/>
            <person name="Town C.D."/>
        </authorList>
    </citation>
    <scope>GENOME REANNOTATION</scope>
    <source>
        <strain>cv. Columbia</strain>
    </source>
</reference>
<reference key="3">
    <citation type="journal article" date="2003" name="Science">
        <title>Empirical analysis of transcriptional activity in the Arabidopsis genome.</title>
        <authorList>
            <person name="Yamada K."/>
            <person name="Lim J."/>
            <person name="Dale J.M."/>
            <person name="Chen H."/>
            <person name="Shinn P."/>
            <person name="Palm C.J."/>
            <person name="Southwick A.M."/>
            <person name="Wu H.C."/>
            <person name="Kim C.J."/>
            <person name="Nguyen M."/>
            <person name="Pham P.K."/>
            <person name="Cheuk R.F."/>
            <person name="Karlin-Newmann G."/>
            <person name="Liu S.X."/>
            <person name="Lam B."/>
            <person name="Sakano H."/>
            <person name="Wu T."/>
            <person name="Yu G."/>
            <person name="Miranda M."/>
            <person name="Quach H.L."/>
            <person name="Tripp M."/>
            <person name="Chang C.H."/>
            <person name="Lee J.M."/>
            <person name="Toriumi M.J."/>
            <person name="Chan M.M."/>
            <person name="Tang C.C."/>
            <person name="Onodera C.S."/>
            <person name="Deng J.M."/>
            <person name="Akiyama K."/>
            <person name="Ansari Y."/>
            <person name="Arakawa T."/>
            <person name="Banh J."/>
            <person name="Banno F."/>
            <person name="Bowser L."/>
            <person name="Brooks S.Y."/>
            <person name="Carninci P."/>
            <person name="Chao Q."/>
            <person name="Choy N."/>
            <person name="Enju A."/>
            <person name="Goldsmith A.D."/>
            <person name="Gurjal M."/>
            <person name="Hansen N.F."/>
            <person name="Hayashizaki Y."/>
            <person name="Johnson-Hopson C."/>
            <person name="Hsuan V.W."/>
            <person name="Iida K."/>
            <person name="Karnes M."/>
            <person name="Khan S."/>
            <person name="Koesema E."/>
            <person name="Ishida J."/>
            <person name="Jiang P.X."/>
            <person name="Jones T."/>
            <person name="Kawai J."/>
            <person name="Kamiya A."/>
            <person name="Meyers C."/>
            <person name="Nakajima M."/>
            <person name="Narusaka M."/>
            <person name="Seki M."/>
            <person name="Sakurai T."/>
            <person name="Satou M."/>
            <person name="Tamse R."/>
            <person name="Vaysberg M."/>
            <person name="Wallender E.K."/>
            <person name="Wong C."/>
            <person name="Yamamura Y."/>
            <person name="Yuan S."/>
            <person name="Shinozaki K."/>
            <person name="Davis R.W."/>
            <person name="Theologis A."/>
            <person name="Ecker J.R."/>
        </authorList>
    </citation>
    <scope>NUCLEOTIDE SEQUENCE [LARGE SCALE MRNA] (ISOFORMS 1 AND 2)</scope>
    <source>
        <strain>cv. Columbia</strain>
    </source>
</reference>
<reference key="4">
    <citation type="journal article" date="2005" name="Physiol. Plantarum">
        <title>Protease activities in the chloroplast capable of cleaving an LHCII N-terminal peptide.</title>
        <authorList>
            <person name="Forsberg J."/>
            <person name="Stroem J."/>
            <person name="Kieselbach T."/>
            <person name="Larsson H."/>
            <person name="Alexciev K."/>
            <person name="Engstroem A."/>
            <person name="Aekerlund H.-E."/>
        </authorList>
    </citation>
    <scope>FUNCTION</scope>
</reference>
<proteinExistence type="evidence at transcript level"/>
<feature type="transit peptide" description="Chloroplast" evidence="2">
    <location>
        <begin position="1"/>
        <end position="62"/>
    </location>
</feature>
<feature type="chain" id="PRO_0000397884" description="Probable glutamyl endopeptidase, chloroplastic">
    <location>
        <begin position="63"/>
        <end position="960"/>
    </location>
</feature>
<feature type="region of interest" description="Disordered" evidence="3">
    <location>
        <begin position="78"/>
        <end position="98"/>
    </location>
</feature>
<feature type="region of interest" description="Disordered" evidence="3">
    <location>
        <begin position="915"/>
        <end position="960"/>
    </location>
</feature>
<feature type="compositionally biased region" description="Polar residues" evidence="3">
    <location>
        <begin position="89"/>
        <end position="98"/>
    </location>
</feature>
<feature type="compositionally biased region" description="Basic and acidic residues" evidence="3">
    <location>
        <begin position="924"/>
        <end position="933"/>
    </location>
</feature>
<feature type="active site" description="Charge relay system" evidence="1">
    <location>
        <position position="780"/>
    </location>
</feature>
<feature type="active site" description="Charge relay system" evidence="1">
    <location>
        <position position="854"/>
    </location>
</feature>
<feature type="active site" description="Charge relay system" evidence="1">
    <location>
        <position position="888"/>
    </location>
</feature>
<feature type="splice variant" id="VSP_039719" description="In isoform 2." evidence="5">
    <original>L</original>
    <variation>LY</variation>
    <location>
        <position position="428"/>
    </location>
</feature>
<feature type="sequence conflict" description="In Ref. 3; AAL57645/AAM20412/AAO11566." evidence="6" ref="3">
    <original>C</original>
    <variation>Y</variation>
    <location>
        <position position="685"/>
    </location>
</feature>
<organism>
    <name type="scientific">Arabidopsis thaliana</name>
    <name type="common">Mouse-ear cress</name>
    <dbReference type="NCBI Taxonomy" id="3702"/>
    <lineage>
        <taxon>Eukaryota</taxon>
        <taxon>Viridiplantae</taxon>
        <taxon>Streptophyta</taxon>
        <taxon>Embryophyta</taxon>
        <taxon>Tracheophyta</taxon>
        <taxon>Spermatophyta</taxon>
        <taxon>Magnoliopsida</taxon>
        <taxon>eudicotyledons</taxon>
        <taxon>Gunneridae</taxon>
        <taxon>Pentapetalae</taxon>
        <taxon>rosids</taxon>
        <taxon>malvids</taxon>
        <taxon>Brassicales</taxon>
        <taxon>Brassicaceae</taxon>
        <taxon>Camelineae</taxon>
        <taxon>Arabidopsis</taxon>
    </lineage>
</organism>
<gene>
    <name type="primary">GEP</name>
    <name type="ordered locus">At2g47390</name>
    <name type="ORF">T8I13.23</name>
</gene>
<dbReference type="EC" id="3.4.21.-"/>
<dbReference type="EMBL" id="AC002337">
    <property type="protein sequence ID" value="AAB63841.1"/>
    <property type="status" value="ALT_SEQ"/>
    <property type="molecule type" value="Genomic_DNA"/>
</dbReference>
<dbReference type="EMBL" id="CP002685">
    <property type="protein sequence ID" value="AEC10835.1"/>
    <property type="molecule type" value="Genomic_DNA"/>
</dbReference>
<dbReference type="EMBL" id="AY064997">
    <property type="protein sequence ID" value="AAL57645.1"/>
    <property type="molecule type" value="mRNA"/>
</dbReference>
<dbReference type="EMBL" id="AY099560">
    <property type="protein sequence ID" value="AAM20412.1"/>
    <property type="molecule type" value="mRNA"/>
</dbReference>
<dbReference type="EMBL" id="BT002650">
    <property type="protein sequence ID" value="AAO11566.1"/>
    <property type="molecule type" value="mRNA"/>
</dbReference>
<dbReference type="PIR" id="F84914">
    <property type="entry name" value="F84914"/>
</dbReference>
<dbReference type="RefSeq" id="NP_850473.1">
    <molecule id="Q8VZF3-2"/>
    <property type="nucleotide sequence ID" value="NM_180142.2"/>
</dbReference>
<dbReference type="SMR" id="Q8VZF3"/>
<dbReference type="BioGRID" id="4687">
    <property type="interactions" value="4"/>
</dbReference>
<dbReference type="FunCoup" id="Q8VZF3">
    <property type="interactions" value="387"/>
</dbReference>
<dbReference type="STRING" id="3702.Q8VZF3"/>
<dbReference type="ESTHER" id="arath-CGEP">
    <property type="family name" value="Glutamyl_Peptidase_S9"/>
</dbReference>
<dbReference type="MEROPS" id="S09.021"/>
<dbReference type="GlyGen" id="Q8VZF3">
    <property type="glycosylation" value="1 site"/>
</dbReference>
<dbReference type="iPTMnet" id="Q8VZF3"/>
<dbReference type="PaxDb" id="3702-AT2G47390.1"/>
<dbReference type="PeptideAtlas" id="Q8VZF3"/>
<dbReference type="ProteomicsDB" id="224477">
    <molecule id="Q8VZF3-1"/>
</dbReference>
<dbReference type="EnsemblPlants" id="AT2G47390.1">
    <molecule id="Q8VZF3-2"/>
    <property type="protein sequence ID" value="AT2G47390.1"/>
    <property type="gene ID" value="AT2G47390"/>
</dbReference>
<dbReference type="GeneID" id="819352"/>
<dbReference type="Gramene" id="AT2G47390.1">
    <molecule id="Q8VZF3-2"/>
    <property type="protein sequence ID" value="AT2G47390.1"/>
    <property type="gene ID" value="AT2G47390"/>
</dbReference>
<dbReference type="KEGG" id="ath:AT2G47390"/>
<dbReference type="Araport" id="AT2G47390"/>
<dbReference type="TAIR" id="AT2G47390"/>
<dbReference type="eggNOG" id="KOG2100">
    <property type="taxonomic scope" value="Eukaryota"/>
</dbReference>
<dbReference type="HOGENOM" id="CLU_017120_0_0_1"/>
<dbReference type="InParanoid" id="Q8VZF3"/>
<dbReference type="OMA" id="WAYPREY"/>
<dbReference type="PRO" id="PR:Q8VZF3"/>
<dbReference type="Proteomes" id="UP000006548">
    <property type="component" value="Chromosome 2"/>
</dbReference>
<dbReference type="ExpressionAtlas" id="Q8VZF3">
    <property type="expression patterns" value="baseline and differential"/>
</dbReference>
<dbReference type="GO" id="GO:0009507">
    <property type="term" value="C:chloroplast"/>
    <property type="evidence" value="ECO:0007005"/>
    <property type="project" value="TAIR"/>
</dbReference>
<dbReference type="GO" id="GO:0009570">
    <property type="term" value="C:chloroplast stroma"/>
    <property type="evidence" value="ECO:0000314"/>
    <property type="project" value="TAIR"/>
</dbReference>
<dbReference type="GO" id="GO:0005829">
    <property type="term" value="C:cytosol"/>
    <property type="evidence" value="ECO:0007005"/>
    <property type="project" value="TAIR"/>
</dbReference>
<dbReference type="GO" id="GO:0004252">
    <property type="term" value="F:serine-type endopeptidase activity"/>
    <property type="evidence" value="ECO:0000314"/>
    <property type="project" value="TAIR"/>
</dbReference>
<dbReference type="GO" id="GO:0006508">
    <property type="term" value="P:proteolysis"/>
    <property type="evidence" value="ECO:0000314"/>
    <property type="project" value="TAIR"/>
</dbReference>
<dbReference type="FunFam" id="3.40.50.1820:FF:000049">
    <property type="entry name" value="probable glutamyl endopeptidase, chloroplastic"/>
    <property type="match status" value="1"/>
</dbReference>
<dbReference type="Gene3D" id="3.40.50.1820">
    <property type="entry name" value="alpha/beta hydrolase"/>
    <property type="match status" value="1"/>
</dbReference>
<dbReference type="Gene3D" id="2.120.10.30">
    <property type="entry name" value="TolB, C-terminal domain"/>
    <property type="match status" value="1"/>
</dbReference>
<dbReference type="InterPro" id="IPR011042">
    <property type="entry name" value="6-blade_b-propeller_TolB-like"/>
</dbReference>
<dbReference type="InterPro" id="IPR029058">
    <property type="entry name" value="AB_hydrolase_fold"/>
</dbReference>
<dbReference type="InterPro" id="IPR001375">
    <property type="entry name" value="Peptidase_S9_cat"/>
</dbReference>
<dbReference type="PANTHER" id="PTHR42776:SF28">
    <property type="entry name" value="GLUTAMYL ENDOPEPTIDASE, CHLOROPLASTIC-RELATED"/>
    <property type="match status" value="1"/>
</dbReference>
<dbReference type="PANTHER" id="PTHR42776">
    <property type="entry name" value="SERINE PEPTIDASE S9 FAMILY MEMBER"/>
    <property type="match status" value="1"/>
</dbReference>
<dbReference type="Pfam" id="PF00326">
    <property type="entry name" value="Peptidase_S9"/>
    <property type="match status" value="1"/>
</dbReference>
<dbReference type="SUPFAM" id="SSF53474">
    <property type="entry name" value="alpha/beta-Hydrolases"/>
    <property type="match status" value="1"/>
</dbReference>
<dbReference type="SUPFAM" id="SSF82171">
    <property type="entry name" value="DPP6 N-terminal domain-like"/>
    <property type="match status" value="1"/>
</dbReference>